<feature type="chain" id="PRO_0000437531" description="PTS system sorbose-specific EIIB component">
    <location>
        <begin position="1"/>
        <end position="164"/>
    </location>
</feature>
<feature type="domain" description="PTS EIIB type-4" evidence="1">
    <location>
        <begin position="1"/>
        <end position="164"/>
    </location>
</feature>
<feature type="active site" description="Pros-phosphohistidine intermediate" evidence="4">
    <location>
        <position position="14"/>
    </location>
</feature>
<feature type="modified residue" description="Phosphohistidine; by EIIA" evidence="1 4">
    <location>
        <position position="14"/>
    </location>
</feature>
<evidence type="ECO:0000255" key="1">
    <source>
        <dbReference type="PROSITE-ProRule" id="PRU00424"/>
    </source>
</evidence>
<evidence type="ECO:0000269" key="2">
    <source>
    </source>
</evidence>
<evidence type="ECO:0000303" key="3">
    <source>
    </source>
</evidence>
<evidence type="ECO:0000305" key="4">
    <source>
    </source>
</evidence>
<comment type="function">
    <text evidence="2">The phosphoenolpyruvate-dependent sugar phosphotransferase system (PTS), a major carbohydrate active transport system, catalyzes the phosphorylation of incoming sugar substrates concomitant with their translocation across the cell membrane. The enzyme II SorABCD PTS system is involved in L-sorbose transport.</text>
</comment>
<comment type="catalytic activity">
    <reaction evidence="4">
        <text>keto-L-sorbose(out) + N(pros)-phospho-L-histidyl-[protein] = L-sorbose 1-phosphate(in) + L-histidyl-[protein]</text>
        <dbReference type="Rhea" id="RHEA:49296"/>
        <dbReference type="Rhea" id="RHEA-COMP:9745"/>
        <dbReference type="Rhea" id="RHEA-COMP:9746"/>
        <dbReference type="ChEBI" id="CHEBI:13172"/>
        <dbReference type="ChEBI" id="CHEBI:29979"/>
        <dbReference type="ChEBI" id="CHEBI:64837"/>
        <dbReference type="ChEBI" id="CHEBI:137409"/>
        <dbReference type="EC" id="2.7.1.206"/>
    </reaction>
</comment>
<comment type="subcellular location">
    <subcellularLocation>
        <location evidence="4">Cytoplasm</location>
    </subcellularLocation>
</comment>
<comment type="induction">
    <text evidence="2">Induced by L-sorbose and repressed by D-glucose.</text>
</comment>
<comment type="domain">
    <text evidence="1">The PTS EIIB type-4 domain is phosphorylated by phospho-EIIA on a histidyl residue. Then, it transfers the phosphoryl group to the sugar substrate concomitantly with the sugar uptake processed by the PTS EIIC type-4 domain.</text>
</comment>
<reference key="1">
    <citation type="journal article" date="2000" name="J. Bacteriol.">
        <title>Genetics of L-sorbose transport and metabolism in Lactobacillus casei.</title>
        <authorList>
            <person name="Yebra M.J."/>
            <person name="Veyrat A."/>
            <person name="Santos M.A."/>
            <person name="Perez-Martinez G."/>
        </authorList>
    </citation>
    <scope>NUCLEOTIDE SEQUENCE [GENOMIC DNA]</scope>
    <scope>FUNCTION</scope>
    <scope>CATALYTIC ACTIVITY</scope>
    <scope>SUBCELLULAR LOCATION</scope>
    <scope>INDUCTION</scope>
    <scope>PHOSPHORYLATION AT HIS-14</scope>
    <source>
        <strain>ATCC 393 / DSM 20011 / JCM 1134 / BCRC 10697 / CCUG 21451 / NBRC 15883 / NCIMB 11970 / NCDO 161 / WDCM 00100</strain>
    </source>
</reference>
<dbReference type="EC" id="2.7.1.206" evidence="4"/>
<dbReference type="EMBL" id="AF129168">
    <property type="protein sequence ID" value="AAF24132.1"/>
    <property type="molecule type" value="Genomic_DNA"/>
</dbReference>
<dbReference type="SMR" id="Q9RGG4"/>
<dbReference type="TCDB" id="4.A.6.1.26">
    <property type="family name" value="the pts mannose-fructose-sorbose (man) family"/>
</dbReference>
<dbReference type="iPTMnet" id="Q9RGG4"/>
<dbReference type="eggNOG" id="COG3444">
    <property type="taxonomic scope" value="Bacteria"/>
</dbReference>
<dbReference type="OMA" id="GQVITTW"/>
<dbReference type="BRENDA" id="2.7.1.206">
    <property type="organism ID" value="2854"/>
</dbReference>
<dbReference type="GO" id="GO:0005737">
    <property type="term" value="C:cytoplasm"/>
    <property type="evidence" value="ECO:0007669"/>
    <property type="project" value="UniProtKB-SubCell"/>
</dbReference>
<dbReference type="GO" id="GO:0016301">
    <property type="term" value="F:kinase activity"/>
    <property type="evidence" value="ECO:0007669"/>
    <property type="project" value="UniProtKB-KW"/>
</dbReference>
<dbReference type="GO" id="GO:0022871">
    <property type="term" value="F:protein-N(PI)-phosphohistidine-sorbose phosphotransferase system transporter activity"/>
    <property type="evidence" value="ECO:0007669"/>
    <property type="project" value="UniProtKB-EC"/>
</dbReference>
<dbReference type="GO" id="GO:0009401">
    <property type="term" value="P:phosphoenolpyruvate-dependent sugar phosphotransferase system"/>
    <property type="evidence" value="ECO:0007669"/>
    <property type="project" value="UniProtKB-KW"/>
</dbReference>
<dbReference type="CDD" id="cd00001">
    <property type="entry name" value="PTS_IIB_man"/>
    <property type="match status" value="1"/>
</dbReference>
<dbReference type="Gene3D" id="3.40.35.10">
    <property type="entry name" value="Phosphotransferase system, sorbose subfamily IIB component"/>
    <property type="match status" value="1"/>
</dbReference>
<dbReference type="InterPro" id="IPR004720">
    <property type="entry name" value="PTS_IIB_sorbose-sp"/>
</dbReference>
<dbReference type="InterPro" id="IPR036667">
    <property type="entry name" value="PTS_IIB_sorbose-sp_sf"/>
</dbReference>
<dbReference type="InterPro" id="IPR018455">
    <property type="entry name" value="PTS_IIB_sorbose-sp_subgr"/>
</dbReference>
<dbReference type="NCBIfam" id="TIGR00854">
    <property type="entry name" value="pts-sorbose"/>
    <property type="match status" value="1"/>
</dbReference>
<dbReference type="Pfam" id="PF03830">
    <property type="entry name" value="PTSIIB_sorb"/>
    <property type="match status" value="1"/>
</dbReference>
<dbReference type="SUPFAM" id="SSF52728">
    <property type="entry name" value="PTS IIb component"/>
    <property type="match status" value="1"/>
</dbReference>
<dbReference type="PROSITE" id="PS51101">
    <property type="entry name" value="PTS_EIIB_TYPE_4"/>
    <property type="match status" value="1"/>
</dbReference>
<accession>Q9RGG4</accession>
<accession>F2M4V0</accession>
<name>PTRB_LACCA</name>
<proteinExistence type="evidence at protein level"/>
<protein>
    <recommendedName>
        <fullName evidence="3">PTS system sorbose-specific EIIB component</fullName>
    </recommendedName>
    <alternativeName>
        <fullName evidence="3">EIIB-Sor</fullName>
    </alternativeName>
    <alternativeName>
        <fullName evidence="3">Sorbose-specific phosphotransferase enzyme IIB component</fullName>
        <ecNumber evidence="4">2.7.1.206</ecNumber>
    </alternativeName>
</protein>
<gene>
    <name evidence="3" type="primary">sorB</name>
</gene>
<keyword id="KW-0963">Cytoplasm</keyword>
<keyword id="KW-0418">Kinase</keyword>
<keyword id="KW-0597">Phosphoprotein</keyword>
<keyword id="KW-0598">Phosphotransferase system</keyword>
<keyword id="KW-0762">Sugar transport</keyword>
<keyword id="KW-0808">Transferase</keyword>
<keyword id="KW-0813">Transport</keyword>
<organism>
    <name type="scientific">Lacticaseibacillus casei</name>
    <name type="common">Lactobacillus casei</name>
    <dbReference type="NCBI Taxonomy" id="1582"/>
    <lineage>
        <taxon>Bacteria</taxon>
        <taxon>Bacillati</taxon>
        <taxon>Bacillota</taxon>
        <taxon>Bacilli</taxon>
        <taxon>Lactobacillales</taxon>
        <taxon>Lactobacillaceae</taxon>
        <taxon>Lacticaseibacillus</taxon>
    </lineage>
</organism>
<sequence>MIITLARVDDRLIHGQVTTVWSKESNADRIIIVSSEVYKDDIRKTLLKQAAPPGMKVNIVDVPKAIAVYNNPKYQNEKVFYLFTNPREVVDLVKGGIPLEKLNIGGMQFKQGKTQISKAVSLDADDVAAFRELHQLGVKLDLRVVKTDPSSDILAKIDEVFGKE</sequence>